<reference key="1">
    <citation type="journal article" date="2006" name="Proc. Natl. Acad. Sci. U.S.A.">
        <title>Genome reduction in Leptospira borgpetersenii reflects limited transmission potential.</title>
        <authorList>
            <person name="Bulach D.M."/>
            <person name="Zuerner R.L."/>
            <person name="Wilson P."/>
            <person name="Seemann T."/>
            <person name="McGrath A."/>
            <person name="Cullen P.A."/>
            <person name="Davis J."/>
            <person name="Johnson M."/>
            <person name="Kuczek E."/>
            <person name="Alt D.P."/>
            <person name="Peterson-Burch B."/>
            <person name="Coppel R.L."/>
            <person name="Rood J.I."/>
            <person name="Davies J.K."/>
            <person name="Adler B."/>
        </authorList>
    </citation>
    <scope>NUCLEOTIDE SEQUENCE [LARGE SCALE GENOMIC DNA]</scope>
    <source>
        <strain>L550</strain>
    </source>
</reference>
<protein>
    <recommendedName>
        <fullName evidence="1">Glycine dehydrogenase (decarboxylating)</fullName>
        <ecNumber evidence="1">1.4.4.2</ecNumber>
    </recommendedName>
    <alternativeName>
        <fullName evidence="1">Glycine cleavage system P-protein</fullName>
    </alternativeName>
    <alternativeName>
        <fullName evidence="1">Glycine decarboxylase</fullName>
    </alternativeName>
    <alternativeName>
        <fullName evidence="1">Glycine dehydrogenase (aminomethyl-transferring)</fullName>
    </alternativeName>
</protein>
<sequence>MNSTLQNRNRTNLERVSTDPLDTFPRRHIGPDSQQVDKMLKSLGLSSLEELVDKAVPAGIRLKKEPDLPKASTEHKILQDLKNIASQNQIFRSYIGAGYNACIIPGVIQRNILENPGWYTAYTPYQAEISQGRLEALLNFQTMIIDLTGLEISNASLLDEGTAAAEAMFLAYSIRKNEIAKKFFVSELCHPQTIDVVVTRANPLGIEIVIGNHESVELNEDFFGVLLQYPATDGKIIDYTSFIQRAHNVGAISTVAADLLALTLLKSPGEMGADIAVGSSQRFGLPLGFGGPHAGYFATKDEFKRSMPGRLIGVSKDSQGNPGLRLSLQTREQHIRRDKATSNICTAQVLLAVISSMYAVYHGPEGLKDIATRIHKFTSILADALKSSGFTISNDTFFDTITIQAGAKAKDILNRARSERINLREYKDGRIGIALDETVNSDDIKDLFKIFEVKNTDIEKLFSNSGNISDSFKRSTSYLTHPVFQSFHTETKMLRYIRKLESRDLSLTTSMIPLGSCTMKLNATTEMYPVTWPEFGAIHPFAPSEQTKGYKIIFEQLEKWLCEITGFAGVSLQPNAGSQGEYAGLLAIRRYHESRKETHRNVCLIPISAHGTNPASAAMAGFKVVVVSCDQNGNVDLEDLKIKAEEHKNDLAALMITYPSTHGVFEESVKEICQIVHSRGGQVYMDGANMNAQVGLTSPGEIGADVCHLNLHKTFCIPHGGGGPGVGPIGVAKHLVPFLPGHVLVDNTTGNEHGAVSAAPWGSASIVLISWIYIALMGSEGLTNATRISILNANYIAKRLEKAYPVLYKGKNGFVAHECILDVRPFKKSAEIEVEDVAKRLIDYGFHAPTMSFPVPGTLMIEPTESESLEELDRFCEAMLLIHQEILDVQNGTLDKIDNPLKNSPHTAAMTTSDRWDHLYPKERAAYPAPWSRDHKFWPFVGRVDNVYGDRNLVCSCLPVESYQ</sequence>
<proteinExistence type="inferred from homology"/>
<accession>Q055P8</accession>
<name>GCSP_LEPBL</name>
<comment type="function">
    <text evidence="1">The glycine cleavage system catalyzes the degradation of glycine. The P protein binds the alpha-amino group of glycine through its pyridoxal phosphate cofactor; CO(2) is released and the remaining methylamine moiety is then transferred to the lipoamide cofactor of the H protein.</text>
</comment>
<comment type="catalytic activity">
    <reaction evidence="1">
        <text>N(6)-[(R)-lipoyl]-L-lysyl-[glycine-cleavage complex H protein] + glycine + H(+) = N(6)-[(R)-S(8)-aminomethyldihydrolipoyl]-L-lysyl-[glycine-cleavage complex H protein] + CO2</text>
        <dbReference type="Rhea" id="RHEA:24304"/>
        <dbReference type="Rhea" id="RHEA-COMP:10494"/>
        <dbReference type="Rhea" id="RHEA-COMP:10495"/>
        <dbReference type="ChEBI" id="CHEBI:15378"/>
        <dbReference type="ChEBI" id="CHEBI:16526"/>
        <dbReference type="ChEBI" id="CHEBI:57305"/>
        <dbReference type="ChEBI" id="CHEBI:83099"/>
        <dbReference type="ChEBI" id="CHEBI:83143"/>
        <dbReference type="EC" id="1.4.4.2"/>
    </reaction>
</comment>
<comment type="cofactor">
    <cofactor evidence="1">
        <name>pyridoxal 5'-phosphate</name>
        <dbReference type="ChEBI" id="CHEBI:597326"/>
    </cofactor>
</comment>
<comment type="subunit">
    <text evidence="1">The glycine cleavage system is composed of four proteins: P, T, L and H.</text>
</comment>
<comment type="similarity">
    <text evidence="1">Belongs to the GcvP family.</text>
</comment>
<gene>
    <name evidence="1" type="primary">gcvP</name>
    <name type="ordered locus">LBL_0338</name>
</gene>
<dbReference type="EC" id="1.4.4.2" evidence="1"/>
<dbReference type="EMBL" id="CP000348">
    <property type="protein sequence ID" value="ABJ77947.1"/>
    <property type="molecule type" value="Genomic_DNA"/>
</dbReference>
<dbReference type="RefSeq" id="WP_011669375.1">
    <property type="nucleotide sequence ID" value="NC_008508.1"/>
</dbReference>
<dbReference type="SMR" id="Q055P8"/>
<dbReference type="KEGG" id="lbl:LBL_0338"/>
<dbReference type="PATRIC" id="fig|355276.3.peg.415"/>
<dbReference type="HOGENOM" id="CLU_004620_3_2_12"/>
<dbReference type="GO" id="GO:0005829">
    <property type="term" value="C:cytosol"/>
    <property type="evidence" value="ECO:0007669"/>
    <property type="project" value="TreeGrafter"/>
</dbReference>
<dbReference type="GO" id="GO:0005960">
    <property type="term" value="C:glycine cleavage complex"/>
    <property type="evidence" value="ECO:0007669"/>
    <property type="project" value="TreeGrafter"/>
</dbReference>
<dbReference type="GO" id="GO:0016594">
    <property type="term" value="F:glycine binding"/>
    <property type="evidence" value="ECO:0007669"/>
    <property type="project" value="TreeGrafter"/>
</dbReference>
<dbReference type="GO" id="GO:0004375">
    <property type="term" value="F:glycine dehydrogenase (decarboxylating) activity"/>
    <property type="evidence" value="ECO:0007669"/>
    <property type="project" value="UniProtKB-EC"/>
</dbReference>
<dbReference type="GO" id="GO:0030170">
    <property type="term" value="F:pyridoxal phosphate binding"/>
    <property type="evidence" value="ECO:0007669"/>
    <property type="project" value="TreeGrafter"/>
</dbReference>
<dbReference type="GO" id="GO:0019464">
    <property type="term" value="P:glycine decarboxylation via glycine cleavage system"/>
    <property type="evidence" value="ECO:0007669"/>
    <property type="project" value="UniProtKB-UniRule"/>
</dbReference>
<dbReference type="CDD" id="cd00613">
    <property type="entry name" value="GDC-P"/>
    <property type="match status" value="2"/>
</dbReference>
<dbReference type="FunFam" id="3.90.1150.10:FF:000025">
    <property type="entry name" value="Glycine cleavage system P protein"/>
    <property type="match status" value="1"/>
</dbReference>
<dbReference type="FunFam" id="3.40.640.10:FF:000005">
    <property type="entry name" value="Glycine dehydrogenase (decarboxylating), mitochondrial"/>
    <property type="match status" value="1"/>
</dbReference>
<dbReference type="FunFam" id="3.90.1150.10:FF:000007">
    <property type="entry name" value="Glycine dehydrogenase (decarboxylating), mitochondrial"/>
    <property type="match status" value="1"/>
</dbReference>
<dbReference type="FunFam" id="3.40.640.10:FF:000007">
    <property type="entry name" value="glycine dehydrogenase (Decarboxylating), mitochondrial"/>
    <property type="match status" value="1"/>
</dbReference>
<dbReference type="Gene3D" id="3.90.1150.10">
    <property type="entry name" value="Aspartate Aminotransferase, domain 1"/>
    <property type="match status" value="2"/>
</dbReference>
<dbReference type="Gene3D" id="3.40.640.10">
    <property type="entry name" value="Type I PLP-dependent aspartate aminotransferase-like (Major domain)"/>
    <property type="match status" value="2"/>
</dbReference>
<dbReference type="HAMAP" id="MF_00711">
    <property type="entry name" value="GcvP"/>
    <property type="match status" value="1"/>
</dbReference>
<dbReference type="InterPro" id="IPR003437">
    <property type="entry name" value="GcvP"/>
</dbReference>
<dbReference type="InterPro" id="IPR049316">
    <property type="entry name" value="GDC-P_C"/>
</dbReference>
<dbReference type="InterPro" id="IPR049315">
    <property type="entry name" value="GDC-P_N"/>
</dbReference>
<dbReference type="InterPro" id="IPR020581">
    <property type="entry name" value="GDC_P"/>
</dbReference>
<dbReference type="InterPro" id="IPR015424">
    <property type="entry name" value="PyrdxlP-dep_Trfase"/>
</dbReference>
<dbReference type="InterPro" id="IPR015421">
    <property type="entry name" value="PyrdxlP-dep_Trfase_major"/>
</dbReference>
<dbReference type="InterPro" id="IPR015422">
    <property type="entry name" value="PyrdxlP-dep_Trfase_small"/>
</dbReference>
<dbReference type="NCBIfam" id="TIGR00461">
    <property type="entry name" value="gcvP"/>
    <property type="match status" value="1"/>
</dbReference>
<dbReference type="NCBIfam" id="NF003346">
    <property type="entry name" value="PRK04366.1"/>
    <property type="match status" value="1"/>
</dbReference>
<dbReference type="PANTHER" id="PTHR11773:SF1">
    <property type="entry name" value="GLYCINE DEHYDROGENASE (DECARBOXYLATING), MITOCHONDRIAL"/>
    <property type="match status" value="1"/>
</dbReference>
<dbReference type="PANTHER" id="PTHR11773">
    <property type="entry name" value="GLYCINE DEHYDROGENASE, DECARBOXYLATING"/>
    <property type="match status" value="1"/>
</dbReference>
<dbReference type="Pfam" id="PF21478">
    <property type="entry name" value="GcvP2_C"/>
    <property type="match status" value="1"/>
</dbReference>
<dbReference type="Pfam" id="PF02347">
    <property type="entry name" value="GDC-P"/>
    <property type="match status" value="2"/>
</dbReference>
<dbReference type="SUPFAM" id="SSF53383">
    <property type="entry name" value="PLP-dependent transferases"/>
    <property type="match status" value="2"/>
</dbReference>
<organism>
    <name type="scientific">Leptospira borgpetersenii serovar Hardjo-bovis (strain L550)</name>
    <dbReference type="NCBI Taxonomy" id="355276"/>
    <lineage>
        <taxon>Bacteria</taxon>
        <taxon>Pseudomonadati</taxon>
        <taxon>Spirochaetota</taxon>
        <taxon>Spirochaetia</taxon>
        <taxon>Leptospirales</taxon>
        <taxon>Leptospiraceae</taxon>
        <taxon>Leptospira</taxon>
    </lineage>
</organism>
<evidence type="ECO:0000255" key="1">
    <source>
        <dbReference type="HAMAP-Rule" id="MF_00711"/>
    </source>
</evidence>
<evidence type="ECO:0000256" key="2">
    <source>
        <dbReference type="SAM" id="MobiDB-lite"/>
    </source>
</evidence>
<feature type="chain" id="PRO_1000045588" description="Glycine dehydrogenase (decarboxylating)">
    <location>
        <begin position="1"/>
        <end position="964"/>
    </location>
</feature>
<feature type="region of interest" description="Disordered" evidence="2">
    <location>
        <begin position="1"/>
        <end position="25"/>
    </location>
</feature>
<feature type="compositionally biased region" description="Polar residues" evidence="2">
    <location>
        <begin position="1"/>
        <end position="10"/>
    </location>
</feature>
<feature type="modified residue" description="N6-(pyridoxal phosphate)lysine" evidence="1">
    <location>
        <position position="713"/>
    </location>
</feature>
<keyword id="KW-0560">Oxidoreductase</keyword>
<keyword id="KW-0663">Pyridoxal phosphate</keyword>